<reference key="1">
    <citation type="journal article" date="2005" name="Nucleic Acids Res.">
        <title>Genome dynamics and diversity of Shigella species, the etiologic agents of bacillary dysentery.</title>
        <authorList>
            <person name="Yang F."/>
            <person name="Yang J."/>
            <person name="Zhang X."/>
            <person name="Chen L."/>
            <person name="Jiang Y."/>
            <person name="Yan Y."/>
            <person name="Tang X."/>
            <person name="Wang J."/>
            <person name="Xiong Z."/>
            <person name="Dong J."/>
            <person name="Xue Y."/>
            <person name="Zhu Y."/>
            <person name="Xu X."/>
            <person name="Sun L."/>
            <person name="Chen S."/>
            <person name="Nie H."/>
            <person name="Peng J."/>
            <person name="Xu J."/>
            <person name="Wang Y."/>
            <person name="Yuan Z."/>
            <person name="Wen Y."/>
            <person name="Yao Z."/>
            <person name="Shen Y."/>
            <person name="Qiang B."/>
            <person name="Hou Y."/>
            <person name="Yu J."/>
            <person name="Jin Q."/>
        </authorList>
    </citation>
    <scope>NUCLEOTIDE SEQUENCE [LARGE SCALE GENOMIC DNA]</scope>
    <source>
        <strain>Sd197</strain>
    </source>
</reference>
<comment type="function">
    <text evidence="1">Presumably involved in the processing and regular turnover of intracellular proteins. Catalyzes the removal of unsubstituted N-terminal amino acids from various peptides.</text>
</comment>
<comment type="catalytic activity">
    <reaction evidence="1">
        <text>Release of an N-terminal amino acid, Xaa-|-Yaa-, in which Xaa is preferably Leu, but may be other amino acids including Pro although not Arg or Lys, and Yaa may be Pro. Amino acid amides and methyl esters are also readily hydrolyzed, but rates on arylamides are exceedingly low.</text>
        <dbReference type="EC" id="3.4.11.1"/>
    </reaction>
</comment>
<comment type="catalytic activity">
    <reaction evidence="1">
        <text>Release of an N-terminal amino acid, preferentially leucine, but not glutamic or aspartic acids.</text>
        <dbReference type="EC" id="3.4.11.10"/>
    </reaction>
</comment>
<comment type="cofactor">
    <cofactor evidence="1">
        <name>Mn(2+)</name>
        <dbReference type="ChEBI" id="CHEBI:29035"/>
    </cofactor>
    <text evidence="1">Binds 2 manganese ions per subunit.</text>
</comment>
<comment type="subcellular location">
    <subcellularLocation>
        <location evidence="1">Cytoplasm</location>
    </subcellularLocation>
</comment>
<comment type="similarity">
    <text evidence="1">Belongs to the peptidase M17 family.</text>
</comment>
<keyword id="KW-0031">Aminopeptidase</keyword>
<keyword id="KW-0963">Cytoplasm</keyword>
<keyword id="KW-0378">Hydrolase</keyword>
<keyword id="KW-0464">Manganese</keyword>
<keyword id="KW-0479">Metal-binding</keyword>
<keyword id="KW-0645">Protease</keyword>
<keyword id="KW-1185">Reference proteome</keyword>
<protein>
    <recommendedName>
        <fullName evidence="1">Probable cytosol aminopeptidase</fullName>
        <ecNumber evidence="1">3.4.11.1</ecNumber>
    </recommendedName>
    <alternativeName>
        <fullName evidence="1">Leucine aminopeptidase</fullName>
        <shortName evidence="1">LAP</shortName>
        <ecNumber evidence="1">3.4.11.10</ecNumber>
    </alternativeName>
    <alternativeName>
        <fullName evidence="1">Leucyl aminopeptidase</fullName>
    </alternativeName>
</protein>
<sequence>MEFSVKSGSPEKQRSACIVVGVFEPRRLSPIAEQLDKISDGYISALLRRGELEGKPGQTLLLHHVPNVLSERILLIGCGKERELDERQYKQVIQKTINTLNDTGSMEAVCFLTELHVKGRNNYWKVRQAVETAKETLYSFDQLKTNKSEPRRPLRKMVFNVPTRRELTSGERAIQHGLAIAAGIKAAKDLGNMPPNICNAAYLASQARQLADSYSKNVITRVIGEQQMKELGMHSYLAVGQGSQNESLMSVIEYKGNASEDARPIVLVGKGLTFDSGGISIKPSEGMDEMKYDMCGAAAVYGVMRMVAELQLPVNVIGVLAGCENMPGGRAYRPGDVLTTMSGQTVEVLNTDAEGRLVLCDVLTYVERFEPEAVIDVATLTGACVIALGHHITGLMANHNPLAHELIAASEQSGDRAWRLPLGDEYQEQLESNFADMANIGGRPGGAITAGCFLSRFTRKYNWAHLDIAGTAWRSGKAKGATGRPVALLAQFLLNRAGFNGEE</sequence>
<accession>Q328S1</accession>
<evidence type="ECO:0000255" key="1">
    <source>
        <dbReference type="HAMAP-Rule" id="MF_00181"/>
    </source>
</evidence>
<feature type="chain" id="PRO_1000019981" description="Probable cytosol aminopeptidase">
    <location>
        <begin position="1"/>
        <end position="503"/>
    </location>
</feature>
<feature type="active site" evidence="1">
    <location>
        <position position="282"/>
    </location>
</feature>
<feature type="active site" evidence="1">
    <location>
        <position position="356"/>
    </location>
</feature>
<feature type="binding site" evidence="1">
    <location>
        <position position="270"/>
    </location>
    <ligand>
        <name>Mn(2+)</name>
        <dbReference type="ChEBI" id="CHEBI:29035"/>
        <label>2</label>
    </ligand>
</feature>
<feature type="binding site" evidence="1">
    <location>
        <position position="275"/>
    </location>
    <ligand>
        <name>Mn(2+)</name>
        <dbReference type="ChEBI" id="CHEBI:29035"/>
        <label>1</label>
    </ligand>
</feature>
<feature type="binding site" evidence="1">
    <location>
        <position position="275"/>
    </location>
    <ligand>
        <name>Mn(2+)</name>
        <dbReference type="ChEBI" id="CHEBI:29035"/>
        <label>2</label>
    </ligand>
</feature>
<feature type="binding site" evidence="1">
    <location>
        <position position="293"/>
    </location>
    <ligand>
        <name>Mn(2+)</name>
        <dbReference type="ChEBI" id="CHEBI:29035"/>
        <label>2</label>
    </ligand>
</feature>
<feature type="binding site" evidence="1">
    <location>
        <position position="352"/>
    </location>
    <ligand>
        <name>Mn(2+)</name>
        <dbReference type="ChEBI" id="CHEBI:29035"/>
        <label>1</label>
    </ligand>
</feature>
<feature type="binding site" evidence="1">
    <location>
        <position position="354"/>
    </location>
    <ligand>
        <name>Mn(2+)</name>
        <dbReference type="ChEBI" id="CHEBI:29035"/>
        <label>1</label>
    </ligand>
</feature>
<feature type="binding site" evidence="1">
    <location>
        <position position="354"/>
    </location>
    <ligand>
        <name>Mn(2+)</name>
        <dbReference type="ChEBI" id="CHEBI:29035"/>
        <label>2</label>
    </ligand>
</feature>
<gene>
    <name evidence="1" type="primary">pepA</name>
    <name type="ordered locus">SDY_4284</name>
</gene>
<dbReference type="EC" id="3.4.11.1" evidence="1"/>
<dbReference type="EC" id="3.4.11.10" evidence="1"/>
<dbReference type="EMBL" id="CP000034">
    <property type="protein sequence ID" value="ABB64184.1"/>
    <property type="molecule type" value="Genomic_DNA"/>
</dbReference>
<dbReference type="RefSeq" id="WP_000397151.1">
    <property type="nucleotide sequence ID" value="NC_007606.1"/>
</dbReference>
<dbReference type="RefSeq" id="YP_405675.1">
    <property type="nucleotide sequence ID" value="NC_007606.1"/>
</dbReference>
<dbReference type="SMR" id="Q328S1"/>
<dbReference type="STRING" id="300267.SDY_4284"/>
<dbReference type="MEROPS" id="M17.003"/>
<dbReference type="EnsemblBacteria" id="ABB64184">
    <property type="protein sequence ID" value="ABB64184"/>
    <property type="gene ID" value="SDY_4284"/>
</dbReference>
<dbReference type="KEGG" id="sdy:SDY_4284"/>
<dbReference type="PATRIC" id="fig|300267.13.peg.5050"/>
<dbReference type="HOGENOM" id="CLU_013734_2_2_6"/>
<dbReference type="Proteomes" id="UP000002716">
    <property type="component" value="Chromosome"/>
</dbReference>
<dbReference type="GO" id="GO:0005737">
    <property type="term" value="C:cytoplasm"/>
    <property type="evidence" value="ECO:0007669"/>
    <property type="project" value="UniProtKB-SubCell"/>
</dbReference>
<dbReference type="GO" id="GO:0030145">
    <property type="term" value="F:manganese ion binding"/>
    <property type="evidence" value="ECO:0007669"/>
    <property type="project" value="UniProtKB-UniRule"/>
</dbReference>
<dbReference type="GO" id="GO:0070006">
    <property type="term" value="F:metalloaminopeptidase activity"/>
    <property type="evidence" value="ECO:0007669"/>
    <property type="project" value="InterPro"/>
</dbReference>
<dbReference type="GO" id="GO:0006508">
    <property type="term" value="P:proteolysis"/>
    <property type="evidence" value="ECO:0007669"/>
    <property type="project" value="UniProtKB-KW"/>
</dbReference>
<dbReference type="CDD" id="cd00433">
    <property type="entry name" value="Peptidase_M17"/>
    <property type="match status" value="1"/>
</dbReference>
<dbReference type="FunFam" id="3.40.220.10:FF:000001">
    <property type="entry name" value="Probable cytosol aminopeptidase"/>
    <property type="match status" value="1"/>
</dbReference>
<dbReference type="FunFam" id="3.40.630.10:FF:000004">
    <property type="entry name" value="Probable cytosol aminopeptidase"/>
    <property type="match status" value="1"/>
</dbReference>
<dbReference type="Gene3D" id="3.40.220.10">
    <property type="entry name" value="Leucine Aminopeptidase, subunit E, domain 1"/>
    <property type="match status" value="1"/>
</dbReference>
<dbReference type="Gene3D" id="3.40.630.10">
    <property type="entry name" value="Zn peptidases"/>
    <property type="match status" value="1"/>
</dbReference>
<dbReference type="HAMAP" id="MF_00181">
    <property type="entry name" value="Cytosol_peptidase_M17"/>
    <property type="match status" value="1"/>
</dbReference>
<dbReference type="InterPro" id="IPR011356">
    <property type="entry name" value="Leucine_aapep/pepB"/>
</dbReference>
<dbReference type="InterPro" id="IPR043472">
    <property type="entry name" value="Macro_dom-like"/>
</dbReference>
<dbReference type="InterPro" id="IPR000819">
    <property type="entry name" value="Peptidase_M17_C"/>
</dbReference>
<dbReference type="InterPro" id="IPR023042">
    <property type="entry name" value="Peptidase_M17_leu_NH2_pept"/>
</dbReference>
<dbReference type="InterPro" id="IPR008283">
    <property type="entry name" value="Peptidase_M17_N"/>
</dbReference>
<dbReference type="NCBIfam" id="NF002072">
    <property type="entry name" value="PRK00913.1-1"/>
    <property type="match status" value="1"/>
</dbReference>
<dbReference type="NCBIfam" id="NF002073">
    <property type="entry name" value="PRK00913.1-2"/>
    <property type="match status" value="1"/>
</dbReference>
<dbReference type="NCBIfam" id="NF002074">
    <property type="entry name" value="PRK00913.1-4"/>
    <property type="match status" value="1"/>
</dbReference>
<dbReference type="PANTHER" id="PTHR11963:SF23">
    <property type="entry name" value="CYTOSOL AMINOPEPTIDASE"/>
    <property type="match status" value="1"/>
</dbReference>
<dbReference type="PANTHER" id="PTHR11963">
    <property type="entry name" value="LEUCINE AMINOPEPTIDASE-RELATED"/>
    <property type="match status" value="1"/>
</dbReference>
<dbReference type="Pfam" id="PF00883">
    <property type="entry name" value="Peptidase_M17"/>
    <property type="match status" value="1"/>
</dbReference>
<dbReference type="Pfam" id="PF02789">
    <property type="entry name" value="Peptidase_M17_N"/>
    <property type="match status" value="1"/>
</dbReference>
<dbReference type="PRINTS" id="PR00481">
    <property type="entry name" value="LAMNOPPTDASE"/>
</dbReference>
<dbReference type="SUPFAM" id="SSF52949">
    <property type="entry name" value="Macro domain-like"/>
    <property type="match status" value="1"/>
</dbReference>
<dbReference type="SUPFAM" id="SSF53187">
    <property type="entry name" value="Zn-dependent exopeptidases"/>
    <property type="match status" value="1"/>
</dbReference>
<dbReference type="PROSITE" id="PS00631">
    <property type="entry name" value="CYTOSOL_AP"/>
    <property type="match status" value="1"/>
</dbReference>
<name>AMPA_SHIDS</name>
<organism>
    <name type="scientific">Shigella dysenteriae serotype 1 (strain Sd197)</name>
    <dbReference type="NCBI Taxonomy" id="300267"/>
    <lineage>
        <taxon>Bacteria</taxon>
        <taxon>Pseudomonadati</taxon>
        <taxon>Pseudomonadota</taxon>
        <taxon>Gammaproteobacteria</taxon>
        <taxon>Enterobacterales</taxon>
        <taxon>Enterobacteriaceae</taxon>
        <taxon>Shigella</taxon>
    </lineage>
</organism>
<proteinExistence type="inferred from homology"/>